<sequence>MKIAILSRDGTLYSCKRLREAAIQRGHLVEILDPLSCYMNINPAASSIHYKGRKLPHFDAVIPRIGTAITFYGTAALRQFEMLGSYPLNESVAIARARDKLRSMQLLARQGIDLPVTGIAHSPDDTSDLIDMVGGAPLVVKLVEGTQGIGVVLAETRQAAESVIDAFRGLNAHILVQEYIKEAQGCDIRCLVVGDEVVAAIERRAKEGDFRSNLHRGGAASVASITPQEREIAIKAARTMALDVAGVDILRANRGPLVMEVNASPGLEGIEKTTGIDIAGKMIRWIERHATTEYCLKTGG</sequence>
<feature type="chain" id="PRO_1000194367" description="Ribosomal protein bS6--L-glutamate ligase">
    <location>
        <begin position="1"/>
        <end position="300"/>
    </location>
</feature>
<feature type="domain" description="ATP-grasp" evidence="1">
    <location>
        <begin position="104"/>
        <end position="287"/>
    </location>
</feature>
<feature type="binding site" evidence="1">
    <location>
        <position position="141"/>
    </location>
    <ligand>
        <name>ATP</name>
        <dbReference type="ChEBI" id="CHEBI:30616"/>
    </ligand>
</feature>
<feature type="binding site" evidence="1">
    <location>
        <begin position="178"/>
        <end position="179"/>
    </location>
    <ligand>
        <name>ATP</name>
        <dbReference type="ChEBI" id="CHEBI:30616"/>
    </ligand>
</feature>
<feature type="binding site" evidence="1">
    <location>
        <position position="187"/>
    </location>
    <ligand>
        <name>ATP</name>
        <dbReference type="ChEBI" id="CHEBI:30616"/>
    </ligand>
</feature>
<feature type="binding site" evidence="1">
    <location>
        <begin position="211"/>
        <end position="213"/>
    </location>
    <ligand>
        <name>ATP</name>
        <dbReference type="ChEBI" id="CHEBI:30616"/>
    </ligand>
</feature>
<feature type="binding site" evidence="1">
    <location>
        <position position="248"/>
    </location>
    <ligand>
        <name>Mg(2+)</name>
        <dbReference type="ChEBI" id="CHEBI:18420"/>
        <label>1</label>
    </ligand>
</feature>
<feature type="binding site" evidence="1">
    <location>
        <position position="248"/>
    </location>
    <ligand>
        <name>Mn(2+)</name>
        <dbReference type="ChEBI" id="CHEBI:29035"/>
        <label>1</label>
    </ligand>
</feature>
<feature type="binding site" evidence="1">
    <location>
        <position position="260"/>
    </location>
    <ligand>
        <name>Mg(2+)</name>
        <dbReference type="ChEBI" id="CHEBI:18420"/>
        <label>1</label>
    </ligand>
</feature>
<feature type="binding site" evidence="1">
    <location>
        <position position="260"/>
    </location>
    <ligand>
        <name>Mg(2+)</name>
        <dbReference type="ChEBI" id="CHEBI:18420"/>
        <label>2</label>
    </ligand>
</feature>
<feature type="binding site" evidence="1">
    <location>
        <position position="260"/>
    </location>
    <ligand>
        <name>Mn(2+)</name>
        <dbReference type="ChEBI" id="CHEBI:29035"/>
        <label>1</label>
    </ligand>
</feature>
<feature type="binding site" evidence="1">
    <location>
        <position position="260"/>
    </location>
    <ligand>
        <name>Mn(2+)</name>
        <dbReference type="ChEBI" id="CHEBI:29035"/>
        <label>2</label>
    </ligand>
</feature>
<feature type="binding site" evidence="1">
    <location>
        <position position="262"/>
    </location>
    <ligand>
        <name>Mg(2+)</name>
        <dbReference type="ChEBI" id="CHEBI:18420"/>
        <label>2</label>
    </ligand>
</feature>
<feature type="binding site" evidence="1">
    <location>
        <position position="262"/>
    </location>
    <ligand>
        <name>Mn(2+)</name>
        <dbReference type="ChEBI" id="CHEBI:29035"/>
        <label>2</label>
    </ligand>
</feature>
<evidence type="ECO:0000255" key="1">
    <source>
        <dbReference type="HAMAP-Rule" id="MF_01552"/>
    </source>
</evidence>
<comment type="function">
    <text evidence="1">An L-glutamate ligase that catalyzes the ATP-dependent post-translational addition of glutamate residues to the C-terminus of ribosomal protein bS6 (RpsF). Is also able to catalyze the synthesis of poly-alpha-glutamate in vitro, via ATP hydrolysis from unprotected glutamate as substrate. The number of glutamate residues added to either RpsF or to poly-alpha-glutamate changes with pH.</text>
</comment>
<comment type="cofactor">
    <cofactor evidence="1">
        <name>Mg(2+)</name>
        <dbReference type="ChEBI" id="CHEBI:18420"/>
    </cofactor>
    <cofactor evidence="1">
        <name>Mn(2+)</name>
        <dbReference type="ChEBI" id="CHEBI:29035"/>
    </cofactor>
    <text evidence="1">Binds 2 magnesium or manganese ions per subunit.</text>
</comment>
<comment type="similarity">
    <text evidence="1">Belongs to the RimK family.</text>
</comment>
<keyword id="KW-0067">ATP-binding</keyword>
<keyword id="KW-0436">Ligase</keyword>
<keyword id="KW-0460">Magnesium</keyword>
<keyword id="KW-0464">Manganese</keyword>
<keyword id="KW-0479">Metal-binding</keyword>
<keyword id="KW-0547">Nucleotide-binding</keyword>
<keyword id="KW-0648">Protein biosynthesis</keyword>
<keyword id="KW-1185">Reference proteome</keyword>
<dbReference type="EC" id="6.3.2.-" evidence="1"/>
<dbReference type="EMBL" id="CU928161">
    <property type="protein sequence ID" value="CAR02207.1"/>
    <property type="molecule type" value="Genomic_DNA"/>
</dbReference>
<dbReference type="RefSeq" id="WP_000684321.1">
    <property type="nucleotide sequence ID" value="NC_011742.1"/>
</dbReference>
<dbReference type="SMR" id="B7MHF6"/>
<dbReference type="GeneID" id="93776570"/>
<dbReference type="KEGG" id="ecz:ECS88_0869"/>
<dbReference type="HOGENOM" id="CLU_054353_0_1_6"/>
<dbReference type="Proteomes" id="UP000000747">
    <property type="component" value="Chromosome"/>
</dbReference>
<dbReference type="GO" id="GO:0005737">
    <property type="term" value="C:cytoplasm"/>
    <property type="evidence" value="ECO:0007669"/>
    <property type="project" value="TreeGrafter"/>
</dbReference>
<dbReference type="GO" id="GO:0005524">
    <property type="term" value="F:ATP binding"/>
    <property type="evidence" value="ECO:0007669"/>
    <property type="project" value="UniProtKB-UniRule"/>
</dbReference>
<dbReference type="GO" id="GO:0046872">
    <property type="term" value="F:metal ion binding"/>
    <property type="evidence" value="ECO:0007669"/>
    <property type="project" value="UniProtKB-KW"/>
</dbReference>
<dbReference type="GO" id="GO:0018169">
    <property type="term" value="F:ribosomal S6-glutamic acid ligase activity"/>
    <property type="evidence" value="ECO:0007669"/>
    <property type="project" value="UniProtKB-UniRule"/>
</dbReference>
<dbReference type="GO" id="GO:0036211">
    <property type="term" value="P:protein modification process"/>
    <property type="evidence" value="ECO:0007669"/>
    <property type="project" value="InterPro"/>
</dbReference>
<dbReference type="GO" id="GO:0009432">
    <property type="term" value="P:SOS response"/>
    <property type="evidence" value="ECO:0007669"/>
    <property type="project" value="TreeGrafter"/>
</dbReference>
<dbReference type="GO" id="GO:0006412">
    <property type="term" value="P:translation"/>
    <property type="evidence" value="ECO:0007669"/>
    <property type="project" value="UniProtKB-KW"/>
</dbReference>
<dbReference type="FunFam" id="3.40.50.20:FF:000004">
    <property type="entry name" value="Probable alpha-L-glutamate ligase"/>
    <property type="match status" value="1"/>
</dbReference>
<dbReference type="FunFam" id="3.30.1490.20:FF:000005">
    <property type="entry name" value="Probable alpha-L-glutamate ligase 1"/>
    <property type="match status" value="1"/>
</dbReference>
<dbReference type="FunFam" id="3.30.470.20:FF:000016">
    <property type="entry name" value="Ribosomal protein S6--L-glutamate ligase"/>
    <property type="match status" value="1"/>
</dbReference>
<dbReference type="Gene3D" id="3.40.50.20">
    <property type="match status" value="1"/>
</dbReference>
<dbReference type="Gene3D" id="3.30.1490.20">
    <property type="entry name" value="ATP-grasp fold, A domain"/>
    <property type="match status" value="1"/>
</dbReference>
<dbReference type="Gene3D" id="3.30.470.20">
    <property type="entry name" value="ATP-grasp fold, B domain"/>
    <property type="match status" value="1"/>
</dbReference>
<dbReference type="HAMAP" id="MF_01552">
    <property type="entry name" value="RimK"/>
    <property type="match status" value="1"/>
</dbReference>
<dbReference type="InterPro" id="IPR011761">
    <property type="entry name" value="ATP-grasp"/>
</dbReference>
<dbReference type="InterPro" id="IPR013651">
    <property type="entry name" value="ATP-grasp_RimK-type"/>
</dbReference>
<dbReference type="InterPro" id="IPR013815">
    <property type="entry name" value="ATP_grasp_subdomain_1"/>
</dbReference>
<dbReference type="InterPro" id="IPR023533">
    <property type="entry name" value="RimK"/>
</dbReference>
<dbReference type="InterPro" id="IPR041107">
    <property type="entry name" value="Rimk_N"/>
</dbReference>
<dbReference type="InterPro" id="IPR004666">
    <property type="entry name" value="Rp_bS6_RimK/Lys_biosynth_LsyX"/>
</dbReference>
<dbReference type="NCBIfam" id="NF007764">
    <property type="entry name" value="PRK10446.1"/>
    <property type="match status" value="1"/>
</dbReference>
<dbReference type="NCBIfam" id="TIGR00768">
    <property type="entry name" value="rimK_fam"/>
    <property type="match status" value="1"/>
</dbReference>
<dbReference type="PANTHER" id="PTHR21621:SF7">
    <property type="entry name" value="RIBOSOMAL PROTEIN BS6--L-GLUTAMATE LIGASE"/>
    <property type="match status" value="1"/>
</dbReference>
<dbReference type="PANTHER" id="PTHR21621">
    <property type="entry name" value="RIBOSOMAL PROTEIN S6 MODIFICATION PROTEIN"/>
    <property type="match status" value="1"/>
</dbReference>
<dbReference type="Pfam" id="PF08443">
    <property type="entry name" value="RimK"/>
    <property type="match status" value="1"/>
</dbReference>
<dbReference type="Pfam" id="PF18030">
    <property type="entry name" value="Rimk_N"/>
    <property type="match status" value="1"/>
</dbReference>
<dbReference type="SUPFAM" id="SSF56059">
    <property type="entry name" value="Glutathione synthetase ATP-binding domain-like"/>
    <property type="match status" value="1"/>
</dbReference>
<dbReference type="PROSITE" id="PS50975">
    <property type="entry name" value="ATP_GRASP"/>
    <property type="match status" value="1"/>
</dbReference>
<proteinExistence type="inferred from homology"/>
<organism>
    <name type="scientific">Escherichia coli O45:K1 (strain S88 / ExPEC)</name>
    <dbReference type="NCBI Taxonomy" id="585035"/>
    <lineage>
        <taxon>Bacteria</taxon>
        <taxon>Pseudomonadati</taxon>
        <taxon>Pseudomonadota</taxon>
        <taxon>Gammaproteobacteria</taxon>
        <taxon>Enterobacterales</taxon>
        <taxon>Enterobacteriaceae</taxon>
        <taxon>Escherichia</taxon>
    </lineage>
</organism>
<name>RIMK_ECO45</name>
<reference key="1">
    <citation type="journal article" date="2009" name="PLoS Genet.">
        <title>Organised genome dynamics in the Escherichia coli species results in highly diverse adaptive paths.</title>
        <authorList>
            <person name="Touchon M."/>
            <person name="Hoede C."/>
            <person name="Tenaillon O."/>
            <person name="Barbe V."/>
            <person name="Baeriswyl S."/>
            <person name="Bidet P."/>
            <person name="Bingen E."/>
            <person name="Bonacorsi S."/>
            <person name="Bouchier C."/>
            <person name="Bouvet O."/>
            <person name="Calteau A."/>
            <person name="Chiapello H."/>
            <person name="Clermont O."/>
            <person name="Cruveiller S."/>
            <person name="Danchin A."/>
            <person name="Diard M."/>
            <person name="Dossat C."/>
            <person name="Karoui M.E."/>
            <person name="Frapy E."/>
            <person name="Garry L."/>
            <person name="Ghigo J.M."/>
            <person name="Gilles A.M."/>
            <person name="Johnson J."/>
            <person name="Le Bouguenec C."/>
            <person name="Lescat M."/>
            <person name="Mangenot S."/>
            <person name="Martinez-Jehanne V."/>
            <person name="Matic I."/>
            <person name="Nassif X."/>
            <person name="Oztas S."/>
            <person name="Petit M.A."/>
            <person name="Pichon C."/>
            <person name="Rouy Z."/>
            <person name="Ruf C.S."/>
            <person name="Schneider D."/>
            <person name="Tourret J."/>
            <person name="Vacherie B."/>
            <person name="Vallenet D."/>
            <person name="Medigue C."/>
            <person name="Rocha E.P.C."/>
            <person name="Denamur E."/>
        </authorList>
    </citation>
    <scope>NUCLEOTIDE SEQUENCE [LARGE SCALE GENOMIC DNA]</scope>
    <source>
        <strain>S88 / ExPEC</strain>
    </source>
</reference>
<gene>
    <name evidence="1" type="primary">rimK</name>
    <name type="ordered locus">ECS88_0869</name>
</gene>
<accession>B7MHF6</accession>
<protein>
    <recommendedName>
        <fullName evidence="1">Ribosomal protein bS6--L-glutamate ligase</fullName>
        <ecNumber evidence="1">6.3.2.-</ecNumber>
    </recommendedName>
    <alternativeName>
        <fullName evidence="1">Poly-alpha-glutamate synthase</fullName>
    </alternativeName>
    <alternativeName>
        <fullName evidence="1">Ribosomal protein bS6 modification protein</fullName>
    </alternativeName>
</protein>